<name>PYRH_PARMW</name>
<reference key="1">
    <citation type="journal article" date="2003" name="Nature">
        <title>The genome of a motile marine Synechococcus.</title>
        <authorList>
            <person name="Palenik B."/>
            <person name="Brahamsha B."/>
            <person name="Larimer F.W."/>
            <person name="Land M.L."/>
            <person name="Hauser L."/>
            <person name="Chain P."/>
            <person name="Lamerdin J.E."/>
            <person name="Regala W."/>
            <person name="Allen E.E."/>
            <person name="McCarren J."/>
            <person name="Paulsen I.T."/>
            <person name="Dufresne A."/>
            <person name="Partensky F."/>
            <person name="Webb E.A."/>
            <person name="Waterbury J."/>
        </authorList>
    </citation>
    <scope>NUCLEOTIDE SEQUENCE [LARGE SCALE GENOMIC DNA]</scope>
    <source>
        <strain>WH8102</strain>
    </source>
</reference>
<accession>Q7U5F5</accession>
<evidence type="ECO:0000255" key="1">
    <source>
        <dbReference type="HAMAP-Rule" id="MF_01220"/>
    </source>
</evidence>
<sequence>MTYSRVLLKLSGEALMGTQGYGIDPAIVNSIASDVAKVVAGGTELAIVVGGGNIFRGLKGSAAGMERATADYVGMLATVMNAITLQDGLERAGVPTRVQTAIAMQEVAEPYIRRKAMRHLEKGRVVVFGAGCGNPFFTTDTTAALRAAEINADVVFKATKVDGVYDKDPAKHADAVKHAHLTYQDVLSGELAVMDSTAIALCKDNNIPIVVFNLFEPGNIGRAVAGEPIGSRIGNPA</sequence>
<proteinExistence type="inferred from homology"/>
<comment type="function">
    <text evidence="1">Catalyzes the reversible phosphorylation of UMP to UDP.</text>
</comment>
<comment type="catalytic activity">
    <reaction evidence="1">
        <text>UMP + ATP = UDP + ADP</text>
        <dbReference type="Rhea" id="RHEA:24400"/>
        <dbReference type="ChEBI" id="CHEBI:30616"/>
        <dbReference type="ChEBI" id="CHEBI:57865"/>
        <dbReference type="ChEBI" id="CHEBI:58223"/>
        <dbReference type="ChEBI" id="CHEBI:456216"/>
        <dbReference type="EC" id="2.7.4.22"/>
    </reaction>
</comment>
<comment type="activity regulation">
    <text evidence="1">Allosterically activated by GTP. Inhibited by UTP.</text>
</comment>
<comment type="pathway">
    <text evidence="1">Pyrimidine metabolism; CTP biosynthesis via de novo pathway; UDP from UMP (UMPK route): step 1/1.</text>
</comment>
<comment type="subunit">
    <text evidence="1">Homohexamer.</text>
</comment>
<comment type="subcellular location">
    <subcellularLocation>
        <location evidence="1">Cytoplasm</location>
    </subcellularLocation>
</comment>
<comment type="similarity">
    <text evidence="1">Belongs to the UMP kinase family.</text>
</comment>
<protein>
    <recommendedName>
        <fullName evidence="1">Uridylate kinase</fullName>
        <shortName evidence="1">UK</shortName>
        <ecNumber evidence="1">2.7.4.22</ecNumber>
    </recommendedName>
    <alternativeName>
        <fullName evidence="1">Uridine monophosphate kinase</fullName>
        <shortName evidence="1">UMP kinase</shortName>
        <shortName evidence="1">UMPK</shortName>
    </alternativeName>
</protein>
<dbReference type="EC" id="2.7.4.22" evidence="1"/>
<dbReference type="EMBL" id="BX569693">
    <property type="protein sequence ID" value="CAE08267.1"/>
    <property type="molecule type" value="Genomic_DNA"/>
</dbReference>
<dbReference type="RefSeq" id="WP_011128612.1">
    <property type="nucleotide sequence ID" value="NC_005070.1"/>
</dbReference>
<dbReference type="SMR" id="Q7U5F5"/>
<dbReference type="STRING" id="84588.SYNW1752"/>
<dbReference type="KEGG" id="syw:SYNW1752"/>
<dbReference type="eggNOG" id="COG0528">
    <property type="taxonomic scope" value="Bacteria"/>
</dbReference>
<dbReference type="HOGENOM" id="CLU_033861_0_0_3"/>
<dbReference type="UniPathway" id="UPA00159">
    <property type="reaction ID" value="UER00275"/>
</dbReference>
<dbReference type="Proteomes" id="UP000001422">
    <property type="component" value="Chromosome"/>
</dbReference>
<dbReference type="GO" id="GO:0005737">
    <property type="term" value="C:cytoplasm"/>
    <property type="evidence" value="ECO:0007669"/>
    <property type="project" value="UniProtKB-SubCell"/>
</dbReference>
<dbReference type="GO" id="GO:0005524">
    <property type="term" value="F:ATP binding"/>
    <property type="evidence" value="ECO:0007669"/>
    <property type="project" value="UniProtKB-KW"/>
</dbReference>
<dbReference type="GO" id="GO:0033862">
    <property type="term" value="F:UMP kinase activity"/>
    <property type="evidence" value="ECO:0007669"/>
    <property type="project" value="UniProtKB-EC"/>
</dbReference>
<dbReference type="GO" id="GO:0044210">
    <property type="term" value="P:'de novo' CTP biosynthetic process"/>
    <property type="evidence" value="ECO:0007669"/>
    <property type="project" value="UniProtKB-UniRule"/>
</dbReference>
<dbReference type="GO" id="GO:0006225">
    <property type="term" value="P:UDP biosynthetic process"/>
    <property type="evidence" value="ECO:0007669"/>
    <property type="project" value="TreeGrafter"/>
</dbReference>
<dbReference type="CDD" id="cd04254">
    <property type="entry name" value="AAK_UMPK-PyrH-Ec"/>
    <property type="match status" value="1"/>
</dbReference>
<dbReference type="FunFam" id="3.40.1160.10:FF:000001">
    <property type="entry name" value="Uridylate kinase"/>
    <property type="match status" value="1"/>
</dbReference>
<dbReference type="Gene3D" id="3.40.1160.10">
    <property type="entry name" value="Acetylglutamate kinase-like"/>
    <property type="match status" value="1"/>
</dbReference>
<dbReference type="HAMAP" id="MF_01220_B">
    <property type="entry name" value="PyrH_B"/>
    <property type="match status" value="1"/>
</dbReference>
<dbReference type="InterPro" id="IPR036393">
    <property type="entry name" value="AceGlu_kinase-like_sf"/>
</dbReference>
<dbReference type="InterPro" id="IPR001048">
    <property type="entry name" value="Asp/Glu/Uridylate_kinase"/>
</dbReference>
<dbReference type="InterPro" id="IPR011817">
    <property type="entry name" value="Uridylate_kinase"/>
</dbReference>
<dbReference type="InterPro" id="IPR015963">
    <property type="entry name" value="Uridylate_kinase_bac"/>
</dbReference>
<dbReference type="NCBIfam" id="TIGR02075">
    <property type="entry name" value="pyrH_bact"/>
    <property type="match status" value="1"/>
</dbReference>
<dbReference type="PANTHER" id="PTHR42833">
    <property type="entry name" value="URIDYLATE KINASE"/>
    <property type="match status" value="1"/>
</dbReference>
<dbReference type="PANTHER" id="PTHR42833:SF4">
    <property type="entry name" value="URIDYLATE KINASE PUMPKIN, CHLOROPLASTIC"/>
    <property type="match status" value="1"/>
</dbReference>
<dbReference type="Pfam" id="PF00696">
    <property type="entry name" value="AA_kinase"/>
    <property type="match status" value="1"/>
</dbReference>
<dbReference type="PIRSF" id="PIRSF005650">
    <property type="entry name" value="Uridylate_kin"/>
    <property type="match status" value="1"/>
</dbReference>
<dbReference type="SUPFAM" id="SSF53633">
    <property type="entry name" value="Carbamate kinase-like"/>
    <property type="match status" value="1"/>
</dbReference>
<organism>
    <name type="scientific">Parasynechococcus marenigrum (strain WH8102)</name>
    <dbReference type="NCBI Taxonomy" id="84588"/>
    <lineage>
        <taxon>Bacteria</taxon>
        <taxon>Bacillati</taxon>
        <taxon>Cyanobacteriota</taxon>
        <taxon>Cyanophyceae</taxon>
        <taxon>Synechococcales</taxon>
        <taxon>Prochlorococcaceae</taxon>
        <taxon>Parasynechococcus</taxon>
        <taxon>Parasynechococcus marenigrum</taxon>
    </lineage>
</organism>
<gene>
    <name evidence="1" type="primary">pyrH</name>
    <name type="synonym">smbA</name>
    <name type="ordered locus">SYNW1752</name>
</gene>
<keyword id="KW-0021">Allosteric enzyme</keyword>
<keyword id="KW-0067">ATP-binding</keyword>
<keyword id="KW-0963">Cytoplasm</keyword>
<keyword id="KW-0418">Kinase</keyword>
<keyword id="KW-0547">Nucleotide-binding</keyword>
<keyword id="KW-0665">Pyrimidine biosynthesis</keyword>
<keyword id="KW-0808">Transferase</keyword>
<feature type="chain" id="PRO_0000323971" description="Uridylate kinase">
    <location>
        <begin position="1"/>
        <end position="237"/>
    </location>
</feature>
<feature type="region of interest" description="Involved in allosteric activation by GTP" evidence="1">
    <location>
        <begin position="17"/>
        <end position="22"/>
    </location>
</feature>
<feature type="binding site" evidence="1">
    <location>
        <begin position="9"/>
        <end position="12"/>
    </location>
    <ligand>
        <name>ATP</name>
        <dbReference type="ChEBI" id="CHEBI:30616"/>
    </ligand>
</feature>
<feature type="binding site" evidence="1">
    <location>
        <position position="51"/>
    </location>
    <ligand>
        <name>UMP</name>
        <dbReference type="ChEBI" id="CHEBI:57865"/>
    </ligand>
</feature>
<feature type="binding site" evidence="1">
    <location>
        <position position="52"/>
    </location>
    <ligand>
        <name>ATP</name>
        <dbReference type="ChEBI" id="CHEBI:30616"/>
    </ligand>
</feature>
<feature type="binding site" evidence="1">
    <location>
        <position position="56"/>
    </location>
    <ligand>
        <name>ATP</name>
        <dbReference type="ChEBI" id="CHEBI:30616"/>
    </ligand>
</feature>
<feature type="binding site" evidence="1">
    <location>
        <position position="71"/>
    </location>
    <ligand>
        <name>UMP</name>
        <dbReference type="ChEBI" id="CHEBI:57865"/>
    </ligand>
</feature>
<feature type="binding site" evidence="1">
    <location>
        <begin position="132"/>
        <end position="139"/>
    </location>
    <ligand>
        <name>UMP</name>
        <dbReference type="ChEBI" id="CHEBI:57865"/>
    </ligand>
</feature>
<feature type="binding site" evidence="1">
    <location>
        <position position="159"/>
    </location>
    <ligand>
        <name>ATP</name>
        <dbReference type="ChEBI" id="CHEBI:30616"/>
    </ligand>
</feature>
<feature type="binding site" evidence="1">
    <location>
        <position position="165"/>
    </location>
    <ligand>
        <name>ATP</name>
        <dbReference type="ChEBI" id="CHEBI:30616"/>
    </ligand>
</feature>
<feature type="binding site" evidence="1">
    <location>
        <position position="168"/>
    </location>
    <ligand>
        <name>ATP</name>
        <dbReference type="ChEBI" id="CHEBI:30616"/>
    </ligand>
</feature>